<comment type="function">
    <text evidence="1">Specifically dimethylates two adjacent adenosines (A1518 and A1519) in the loop of a conserved hairpin near the 3'-end of 16S rRNA in the 30S particle. May play a critical role in biogenesis of 30S subunits.</text>
</comment>
<comment type="catalytic activity">
    <reaction evidence="1">
        <text>adenosine(1518)/adenosine(1519) in 16S rRNA + 4 S-adenosyl-L-methionine = N(6)-dimethyladenosine(1518)/N(6)-dimethyladenosine(1519) in 16S rRNA + 4 S-adenosyl-L-homocysteine + 4 H(+)</text>
        <dbReference type="Rhea" id="RHEA:19609"/>
        <dbReference type="Rhea" id="RHEA-COMP:10232"/>
        <dbReference type="Rhea" id="RHEA-COMP:10233"/>
        <dbReference type="ChEBI" id="CHEBI:15378"/>
        <dbReference type="ChEBI" id="CHEBI:57856"/>
        <dbReference type="ChEBI" id="CHEBI:59789"/>
        <dbReference type="ChEBI" id="CHEBI:74411"/>
        <dbReference type="ChEBI" id="CHEBI:74493"/>
        <dbReference type="EC" id="2.1.1.182"/>
    </reaction>
</comment>
<comment type="subcellular location">
    <subcellularLocation>
        <location evidence="1">Cytoplasm</location>
    </subcellularLocation>
</comment>
<comment type="similarity">
    <text evidence="1">Belongs to the class I-like SAM-binding methyltransferase superfamily. rRNA adenine N(6)-methyltransferase family. RsmA subfamily.</text>
</comment>
<gene>
    <name evidence="1" type="primary">rsmA</name>
    <name evidence="1" type="synonym">ksgA</name>
    <name type="ordered locus">jhp_1322</name>
</gene>
<name>RSMA_HELPJ</name>
<dbReference type="EC" id="2.1.1.182" evidence="1"/>
<dbReference type="EMBL" id="AE001439">
    <property type="protein sequence ID" value="AAD06902.1"/>
    <property type="molecule type" value="Genomic_DNA"/>
</dbReference>
<dbReference type="PIR" id="E71821">
    <property type="entry name" value="E71821"/>
</dbReference>
<dbReference type="RefSeq" id="WP_000259355.1">
    <property type="nucleotide sequence ID" value="NC_000921.1"/>
</dbReference>
<dbReference type="SMR" id="Q9ZJI7"/>
<dbReference type="KEGG" id="hpj:jhp_1322"/>
<dbReference type="PATRIC" id="fig|85963.30.peg.1238"/>
<dbReference type="eggNOG" id="COG0030">
    <property type="taxonomic scope" value="Bacteria"/>
</dbReference>
<dbReference type="Proteomes" id="UP000000804">
    <property type="component" value="Chromosome"/>
</dbReference>
<dbReference type="GO" id="GO:0005829">
    <property type="term" value="C:cytosol"/>
    <property type="evidence" value="ECO:0007669"/>
    <property type="project" value="TreeGrafter"/>
</dbReference>
<dbReference type="GO" id="GO:0052908">
    <property type="term" value="F:16S rRNA (adenine(1518)-N(6)/adenine(1519)-N(6))-dimethyltransferase activity"/>
    <property type="evidence" value="ECO:0007669"/>
    <property type="project" value="UniProtKB-EC"/>
</dbReference>
<dbReference type="GO" id="GO:0003723">
    <property type="term" value="F:RNA binding"/>
    <property type="evidence" value="ECO:0007669"/>
    <property type="project" value="UniProtKB-KW"/>
</dbReference>
<dbReference type="CDD" id="cd02440">
    <property type="entry name" value="AdoMet_MTases"/>
    <property type="match status" value="1"/>
</dbReference>
<dbReference type="FunFam" id="3.40.50.150:FF:000456">
    <property type="entry name" value="Ribosomal RNA small subunit methyltransferase A"/>
    <property type="match status" value="1"/>
</dbReference>
<dbReference type="Gene3D" id="1.10.8.100">
    <property type="entry name" value="Ribosomal RNA adenine dimethylase-like, domain 2"/>
    <property type="match status" value="1"/>
</dbReference>
<dbReference type="Gene3D" id="3.40.50.150">
    <property type="entry name" value="Vaccinia Virus protein VP39"/>
    <property type="match status" value="1"/>
</dbReference>
<dbReference type="HAMAP" id="MF_00607">
    <property type="entry name" value="16SrRNA_methyltr_A"/>
    <property type="match status" value="1"/>
</dbReference>
<dbReference type="InterPro" id="IPR001737">
    <property type="entry name" value="KsgA/Erm"/>
</dbReference>
<dbReference type="InterPro" id="IPR023165">
    <property type="entry name" value="rRNA_Ade_diMease-like_C"/>
</dbReference>
<dbReference type="InterPro" id="IPR020596">
    <property type="entry name" value="rRNA_Ade_Mease_Trfase_CS"/>
</dbReference>
<dbReference type="InterPro" id="IPR020598">
    <property type="entry name" value="rRNA_Ade_methylase_Trfase_N"/>
</dbReference>
<dbReference type="InterPro" id="IPR011530">
    <property type="entry name" value="rRNA_adenine_dimethylase"/>
</dbReference>
<dbReference type="InterPro" id="IPR029063">
    <property type="entry name" value="SAM-dependent_MTases_sf"/>
</dbReference>
<dbReference type="NCBIfam" id="TIGR00755">
    <property type="entry name" value="ksgA"/>
    <property type="match status" value="1"/>
</dbReference>
<dbReference type="PANTHER" id="PTHR11727">
    <property type="entry name" value="DIMETHYLADENOSINE TRANSFERASE"/>
    <property type="match status" value="1"/>
</dbReference>
<dbReference type="PANTHER" id="PTHR11727:SF7">
    <property type="entry name" value="DIMETHYLADENOSINE TRANSFERASE-RELATED"/>
    <property type="match status" value="1"/>
</dbReference>
<dbReference type="Pfam" id="PF00398">
    <property type="entry name" value="RrnaAD"/>
    <property type="match status" value="1"/>
</dbReference>
<dbReference type="SMART" id="SM00650">
    <property type="entry name" value="rADc"/>
    <property type="match status" value="1"/>
</dbReference>
<dbReference type="SUPFAM" id="SSF53335">
    <property type="entry name" value="S-adenosyl-L-methionine-dependent methyltransferases"/>
    <property type="match status" value="1"/>
</dbReference>
<dbReference type="PROSITE" id="PS01131">
    <property type="entry name" value="RRNA_A_DIMETH"/>
    <property type="match status" value="1"/>
</dbReference>
<dbReference type="PROSITE" id="PS51689">
    <property type="entry name" value="SAM_RNA_A_N6_MT"/>
    <property type="match status" value="1"/>
</dbReference>
<organism>
    <name type="scientific">Helicobacter pylori (strain J99 / ATCC 700824)</name>
    <name type="common">Campylobacter pylori J99</name>
    <dbReference type="NCBI Taxonomy" id="85963"/>
    <lineage>
        <taxon>Bacteria</taxon>
        <taxon>Pseudomonadati</taxon>
        <taxon>Campylobacterota</taxon>
        <taxon>Epsilonproteobacteria</taxon>
        <taxon>Campylobacterales</taxon>
        <taxon>Helicobacteraceae</taxon>
        <taxon>Helicobacter</taxon>
    </lineage>
</organism>
<protein>
    <recommendedName>
        <fullName evidence="1">Ribosomal RNA small subunit methyltransferase A</fullName>
        <ecNumber evidence="1">2.1.1.182</ecNumber>
    </recommendedName>
    <alternativeName>
        <fullName evidence="1">16S rRNA (adenine(1518)-N(6)/adenine(1519)-N(6))-dimethyltransferase</fullName>
    </alternativeName>
    <alternativeName>
        <fullName evidence="1">16S rRNA dimethyladenosine transferase</fullName>
    </alternativeName>
    <alternativeName>
        <fullName evidence="1">16S rRNA dimethylase</fullName>
    </alternativeName>
    <alternativeName>
        <fullName evidence="1">S-adenosylmethionine-6-N', N'-adenosyl(rRNA) dimethyltransferase</fullName>
    </alternativeName>
</protein>
<reference key="1">
    <citation type="journal article" date="1999" name="Nature">
        <title>Genomic sequence comparison of two unrelated isolates of the human gastric pathogen Helicobacter pylori.</title>
        <authorList>
            <person name="Alm R.A."/>
            <person name="Ling L.-S.L."/>
            <person name="Moir D.T."/>
            <person name="King B.L."/>
            <person name="Brown E.D."/>
            <person name="Doig P.C."/>
            <person name="Smith D.R."/>
            <person name="Noonan B."/>
            <person name="Guild B.C."/>
            <person name="deJonge B.L."/>
            <person name="Carmel G."/>
            <person name="Tummino P.J."/>
            <person name="Caruso A."/>
            <person name="Uria-Nickelsen M."/>
            <person name="Mills D.M."/>
            <person name="Ives C."/>
            <person name="Gibson R."/>
            <person name="Merberg D."/>
            <person name="Mills S.D."/>
            <person name="Jiang Q."/>
            <person name="Taylor D.E."/>
            <person name="Vovis G.F."/>
            <person name="Trust T.J."/>
        </authorList>
    </citation>
    <scope>NUCLEOTIDE SEQUENCE [LARGE SCALE GENOMIC DNA]</scope>
    <source>
        <strain>J99 / ATCC 700824</strain>
    </source>
</reference>
<proteinExistence type="inferred from homology"/>
<feature type="chain" id="PRO_0000101541" description="Ribosomal RNA small subunit methyltransferase A">
    <location>
        <begin position="1"/>
        <end position="271"/>
    </location>
</feature>
<feature type="binding site" evidence="1">
    <location>
        <position position="11"/>
    </location>
    <ligand>
        <name>S-adenosyl-L-methionine</name>
        <dbReference type="ChEBI" id="CHEBI:59789"/>
    </ligand>
</feature>
<feature type="binding site" evidence="1">
    <location>
        <position position="13"/>
    </location>
    <ligand>
        <name>S-adenosyl-L-methionine</name>
        <dbReference type="ChEBI" id="CHEBI:59789"/>
    </ligand>
</feature>
<feature type="binding site" evidence="1">
    <location>
        <position position="38"/>
    </location>
    <ligand>
        <name>S-adenosyl-L-methionine</name>
        <dbReference type="ChEBI" id="CHEBI:59789"/>
    </ligand>
</feature>
<feature type="binding site" evidence="1">
    <location>
        <position position="58"/>
    </location>
    <ligand>
        <name>S-adenosyl-L-methionine</name>
        <dbReference type="ChEBI" id="CHEBI:59789"/>
    </ligand>
</feature>
<feature type="binding site" evidence="1">
    <location>
        <position position="86"/>
    </location>
    <ligand>
        <name>S-adenosyl-L-methionine</name>
        <dbReference type="ChEBI" id="CHEBI:59789"/>
    </ligand>
</feature>
<feature type="binding site" evidence="1">
    <location>
        <position position="101"/>
    </location>
    <ligand>
        <name>S-adenosyl-L-methionine</name>
        <dbReference type="ChEBI" id="CHEBI:59789"/>
    </ligand>
</feature>
<keyword id="KW-0963">Cytoplasm</keyword>
<keyword id="KW-0489">Methyltransferase</keyword>
<keyword id="KW-0694">RNA-binding</keyword>
<keyword id="KW-0698">rRNA processing</keyword>
<keyword id="KW-0949">S-adenosyl-L-methionine</keyword>
<keyword id="KW-0808">Transferase</keyword>
<accession>Q9ZJI7</accession>
<evidence type="ECO:0000255" key="1">
    <source>
        <dbReference type="HAMAP-Rule" id="MF_00607"/>
    </source>
</evidence>
<sequence length="271" mass="30542">MVVAKKSLGQHFLMDESFLDRIVNALPPLNSLRLIEIGVGLGDLTLKLLDRYPLKTYEIDSNLCEKMRARLRAEKKPFQLELVEKDALFLKEEEPYFLISNLPYYIATRLVLNALKDPKCRGLLVMTQKEVALKFCAKDSQNALSVLAHTIGNATLLFDVPPSAFSPPPKVFSSVFEVIKEPLKEKALASLAQAPFFEEALQKGFETLEDFLKACFSSPRKTLSNNLKKSVSYKEKLDKVLDFLALENQPTSVRASEVKDYLKLLKSVLKG</sequence>